<reference key="1">
    <citation type="journal article" date="2007" name="Genome Res.">
        <title>Genome characteristics of facultatively symbiotic Frankia sp. strains reflect host range and host plant biogeography.</title>
        <authorList>
            <person name="Normand P."/>
            <person name="Lapierre P."/>
            <person name="Tisa L.S."/>
            <person name="Gogarten J.P."/>
            <person name="Alloisio N."/>
            <person name="Bagnarol E."/>
            <person name="Bassi C.A."/>
            <person name="Berry A.M."/>
            <person name="Bickhart D.M."/>
            <person name="Choisne N."/>
            <person name="Couloux A."/>
            <person name="Cournoyer B."/>
            <person name="Cruveiller S."/>
            <person name="Daubin V."/>
            <person name="Demange N."/>
            <person name="Francino M.P."/>
            <person name="Goltsman E."/>
            <person name="Huang Y."/>
            <person name="Kopp O.R."/>
            <person name="Labarre L."/>
            <person name="Lapidus A."/>
            <person name="Lavire C."/>
            <person name="Marechal J."/>
            <person name="Martinez M."/>
            <person name="Mastronunzio J.E."/>
            <person name="Mullin B.C."/>
            <person name="Niemann J."/>
            <person name="Pujic P."/>
            <person name="Rawnsley T."/>
            <person name="Rouy Z."/>
            <person name="Schenowitz C."/>
            <person name="Sellstedt A."/>
            <person name="Tavares F."/>
            <person name="Tomkins J.P."/>
            <person name="Vallenet D."/>
            <person name="Valverde C."/>
            <person name="Wall L.G."/>
            <person name="Wang Y."/>
            <person name="Medigue C."/>
            <person name="Benson D.R."/>
        </authorList>
    </citation>
    <scope>NUCLEOTIDE SEQUENCE [LARGE SCALE GENOMIC DNA]</scope>
    <source>
        <strain>DSM 45818 / CECT 9043 / HFP020203 / CcI3</strain>
    </source>
</reference>
<feature type="chain" id="PRO_0000264041" description="Peptidyl-tRNA hydrolase">
    <location>
        <begin position="1"/>
        <end position="197"/>
    </location>
</feature>
<feature type="active site" description="Proton acceptor" evidence="1">
    <location>
        <position position="28"/>
    </location>
</feature>
<feature type="binding site" evidence="1">
    <location>
        <position position="23"/>
    </location>
    <ligand>
        <name>tRNA</name>
        <dbReference type="ChEBI" id="CHEBI:17843"/>
    </ligand>
</feature>
<feature type="binding site" evidence="1">
    <location>
        <position position="73"/>
    </location>
    <ligand>
        <name>tRNA</name>
        <dbReference type="ChEBI" id="CHEBI:17843"/>
    </ligand>
</feature>
<feature type="binding site" evidence="1">
    <location>
        <position position="75"/>
    </location>
    <ligand>
        <name>tRNA</name>
        <dbReference type="ChEBI" id="CHEBI:17843"/>
    </ligand>
</feature>
<feature type="binding site" evidence="1">
    <location>
        <position position="121"/>
    </location>
    <ligand>
        <name>tRNA</name>
        <dbReference type="ChEBI" id="CHEBI:17843"/>
    </ligand>
</feature>
<feature type="site" description="Discriminates between blocked and unblocked aminoacyl-tRNA" evidence="1">
    <location>
        <position position="18"/>
    </location>
</feature>
<feature type="site" description="Stabilizes the basic form of H active site to accept a proton" evidence="1">
    <location>
        <position position="100"/>
    </location>
</feature>
<name>PTH_FRACC</name>
<sequence length="197" mass="21289">MMITPTGDGPWLVAGLGNPGPTYAGNRHNAGFMVVDLLAERTGSRLKSHRSRADVAETRLAGARAVLARPLSFMNLSGGPVAAARSFYKVEVSRLIVVHDELDIPFGAVRLKRGGGDNGHNGLRSISSALGTRDYLRVRVGIGRPPGRMDPADFVLRDFTSTERRELPLLLEHAADSVEMLIADGLEPAQNRYHALL</sequence>
<dbReference type="EC" id="3.1.1.29" evidence="1"/>
<dbReference type="EMBL" id="CP000249">
    <property type="protein sequence ID" value="ABD13301.1"/>
    <property type="molecule type" value="Genomic_DNA"/>
</dbReference>
<dbReference type="SMR" id="Q2J5Z1"/>
<dbReference type="STRING" id="106370.Francci3_3951"/>
<dbReference type="KEGG" id="fra:Francci3_3951"/>
<dbReference type="eggNOG" id="COG0193">
    <property type="taxonomic scope" value="Bacteria"/>
</dbReference>
<dbReference type="HOGENOM" id="CLU_062456_2_2_11"/>
<dbReference type="OrthoDB" id="9800507at2"/>
<dbReference type="PhylomeDB" id="Q2J5Z1"/>
<dbReference type="Proteomes" id="UP000001937">
    <property type="component" value="Chromosome"/>
</dbReference>
<dbReference type="GO" id="GO:0005737">
    <property type="term" value="C:cytoplasm"/>
    <property type="evidence" value="ECO:0007669"/>
    <property type="project" value="UniProtKB-SubCell"/>
</dbReference>
<dbReference type="GO" id="GO:0004045">
    <property type="term" value="F:peptidyl-tRNA hydrolase activity"/>
    <property type="evidence" value="ECO:0007669"/>
    <property type="project" value="UniProtKB-UniRule"/>
</dbReference>
<dbReference type="GO" id="GO:0000049">
    <property type="term" value="F:tRNA binding"/>
    <property type="evidence" value="ECO:0007669"/>
    <property type="project" value="UniProtKB-UniRule"/>
</dbReference>
<dbReference type="GO" id="GO:0006515">
    <property type="term" value="P:protein quality control for misfolded or incompletely synthesized proteins"/>
    <property type="evidence" value="ECO:0007669"/>
    <property type="project" value="UniProtKB-UniRule"/>
</dbReference>
<dbReference type="GO" id="GO:0072344">
    <property type="term" value="P:rescue of stalled ribosome"/>
    <property type="evidence" value="ECO:0007669"/>
    <property type="project" value="UniProtKB-UniRule"/>
</dbReference>
<dbReference type="CDD" id="cd00462">
    <property type="entry name" value="PTH"/>
    <property type="match status" value="1"/>
</dbReference>
<dbReference type="FunFam" id="3.40.50.1470:FF:000001">
    <property type="entry name" value="Peptidyl-tRNA hydrolase"/>
    <property type="match status" value="1"/>
</dbReference>
<dbReference type="Gene3D" id="3.40.50.1470">
    <property type="entry name" value="Peptidyl-tRNA hydrolase"/>
    <property type="match status" value="1"/>
</dbReference>
<dbReference type="HAMAP" id="MF_00083">
    <property type="entry name" value="Pept_tRNA_hydro_bact"/>
    <property type="match status" value="1"/>
</dbReference>
<dbReference type="InterPro" id="IPR001328">
    <property type="entry name" value="Pept_tRNA_hydro"/>
</dbReference>
<dbReference type="InterPro" id="IPR018171">
    <property type="entry name" value="Pept_tRNA_hydro_CS"/>
</dbReference>
<dbReference type="InterPro" id="IPR036416">
    <property type="entry name" value="Pept_tRNA_hydro_sf"/>
</dbReference>
<dbReference type="NCBIfam" id="TIGR00447">
    <property type="entry name" value="pth"/>
    <property type="match status" value="1"/>
</dbReference>
<dbReference type="PANTHER" id="PTHR17224">
    <property type="entry name" value="PEPTIDYL-TRNA HYDROLASE"/>
    <property type="match status" value="1"/>
</dbReference>
<dbReference type="PANTHER" id="PTHR17224:SF1">
    <property type="entry name" value="PEPTIDYL-TRNA HYDROLASE"/>
    <property type="match status" value="1"/>
</dbReference>
<dbReference type="Pfam" id="PF01195">
    <property type="entry name" value="Pept_tRNA_hydro"/>
    <property type="match status" value="1"/>
</dbReference>
<dbReference type="SUPFAM" id="SSF53178">
    <property type="entry name" value="Peptidyl-tRNA hydrolase-like"/>
    <property type="match status" value="1"/>
</dbReference>
<dbReference type="PROSITE" id="PS01195">
    <property type="entry name" value="PEPT_TRNA_HYDROL_1"/>
    <property type="match status" value="1"/>
</dbReference>
<dbReference type="PROSITE" id="PS01196">
    <property type="entry name" value="PEPT_TRNA_HYDROL_2"/>
    <property type="match status" value="1"/>
</dbReference>
<comment type="function">
    <text evidence="1">Hydrolyzes ribosome-free peptidyl-tRNAs (with 1 or more amino acids incorporated), which drop off the ribosome during protein synthesis, or as a result of ribosome stalling.</text>
</comment>
<comment type="function">
    <text evidence="1">Catalyzes the release of premature peptidyl moieties from peptidyl-tRNA molecules trapped in stalled 50S ribosomal subunits, and thus maintains levels of free tRNAs and 50S ribosomes.</text>
</comment>
<comment type="catalytic activity">
    <reaction evidence="1">
        <text>an N-acyl-L-alpha-aminoacyl-tRNA + H2O = an N-acyl-L-amino acid + a tRNA + H(+)</text>
        <dbReference type="Rhea" id="RHEA:54448"/>
        <dbReference type="Rhea" id="RHEA-COMP:10123"/>
        <dbReference type="Rhea" id="RHEA-COMP:13883"/>
        <dbReference type="ChEBI" id="CHEBI:15377"/>
        <dbReference type="ChEBI" id="CHEBI:15378"/>
        <dbReference type="ChEBI" id="CHEBI:59874"/>
        <dbReference type="ChEBI" id="CHEBI:78442"/>
        <dbReference type="ChEBI" id="CHEBI:138191"/>
        <dbReference type="EC" id="3.1.1.29"/>
    </reaction>
</comment>
<comment type="subunit">
    <text evidence="1">Monomer.</text>
</comment>
<comment type="subcellular location">
    <subcellularLocation>
        <location evidence="1">Cytoplasm</location>
    </subcellularLocation>
</comment>
<comment type="similarity">
    <text evidence="1">Belongs to the PTH family.</text>
</comment>
<keyword id="KW-0963">Cytoplasm</keyword>
<keyword id="KW-0378">Hydrolase</keyword>
<keyword id="KW-1185">Reference proteome</keyword>
<keyword id="KW-0694">RNA-binding</keyword>
<keyword id="KW-0820">tRNA-binding</keyword>
<evidence type="ECO:0000255" key="1">
    <source>
        <dbReference type="HAMAP-Rule" id="MF_00083"/>
    </source>
</evidence>
<organism>
    <name type="scientific">Frankia casuarinae (strain DSM 45818 / CECT 9043 / HFP020203 / CcI3)</name>
    <dbReference type="NCBI Taxonomy" id="106370"/>
    <lineage>
        <taxon>Bacteria</taxon>
        <taxon>Bacillati</taxon>
        <taxon>Actinomycetota</taxon>
        <taxon>Actinomycetes</taxon>
        <taxon>Frankiales</taxon>
        <taxon>Frankiaceae</taxon>
        <taxon>Frankia</taxon>
    </lineage>
</organism>
<protein>
    <recommendedName>
        <fullName evidence="1">Peptidyl-tRNA hydrolase</fullName>
        <shortName evidence="1">Pth</shortName>
        <ecNumber evidence="1">3.1.1.29</ecNumber>
    </recommendedName>
</protein>
<gene>
    <name evidence="1" type="primary">pth</name>
    <name type="ordered locus">Francci3_3951</name>
</gene>
<proteinExistence type="inferred from homology"/>
<accession>Q2J5Z1</accession>